<accession>A7FI33</accession>
<protein>
    <recommendedName>
        <fullName evidence="1">Tryptophan synthase beta chain</fullName>
        <ecNumber evidence="1">4.2.1.20</ecNumber>
    </recommendedName>
</protein>
<proteinExistence type="inferred from homology"/>
<evidence type="ECO:0000255" key="1">
    <source>
        <dbReference type="HAMAP-Rule" id="MF_00133"/>
    </source>
</evidence>
<gene>
    <name evidence="1" type="primary">trpB</name>
    <name type="ordered locus">YpsIP31758_1936</name>
</gene>
<reference key="1">
    <citation type="journal article" date="2007" name="PLoS Genet.">
        <title>The complete genome sequence of Yersinia pseudotuberculosis IP31758, the causative agent of Far East scarlet-like fever.</title>
        <authorList>
            <person name="Eppinger M."/>
            <person name="Rosovitz M.J."/>
            <person name="Fricke W.F."/>
            <person name="Rasko D.A."/>
            <person name="Kokorina G."/>
            <person name="Fayolle C."/>
            <person name="Lindler L.E."/>
            <person name="Carniel E."/>
            <person name="Ravel J."/>
        </authorList>
    </citation>
    <scope>NUCLEOTIDE SEQUENCE [LARGE SCALE GENOMIC DNA]</scope>
    <source>
        <strain>IP 31758</strain>
    </source>
</reference>
<feature type="chain" id="PRO_1000057867" description="Tryptophan synthase beta chain">
    <location>
        <begin position="1"/>
        <end position="396"/>
    </location>
</feature>
<feature type="modified residue" description="N6-(pyridoxal phosphate)lysine" evidence="1">
    <location>
        <position position="86"/>
    </location>
</feature>
<name>TRPB_YERP3</name>
<keyword id="KW-0028">Amino-acid biosynthesis</keyword>
<keyword id="KW-0057">Aromatic amino acid biosynthesis</keyword>
<keyword id="KW-0456">Lyase</keyword>
<keyword id="KW-0663">Pyridoxal phosphate</keyword>
<keyword id="KW-0822">Tryptophan biosynthesis</keyword>
<dbReference type="EC" id="4.2.1.20" evidence="1"/>
<dbReference type="EMBL" id="CP000720">
    <property type="protein sequence ID" value="ABS48658.1"/>
    <property type="molecule type" value="Genomic_DNA"/>
</dbReference>
<dbReference type="RefSeq" id="WP_002210633.1">
    <property type="nucleotide sequence ID" value="NC_009708.1"/>
</dbReference>
<dbReference type="SMR" id="A7FI33"/>
<dbReference type="GeneID" id="57976463"/>
<dbReference type="KEGG" id="ypi:YpsIP31758_1936"/>
<dbReference type="HOGENOM" id="CLU_016734_3_1_6"/>
<dbReference type="UniPathway" id="UPA00035">
    <property type="reaction ID" value="UER00044"/>
</dbReference>
<dbReference type="Proteomes" id="UP000002412">
    <property type="component" value="Chromosome"/>
</dbReference>
<dbReference type="GO" id="GO:0005737">
    <property type="term" value="C:cytoplasm"/>
    <property type="evidence" value="ECO:0007669"/>
    <property type="project" value="TreeGrafter"/>
</dbReference>
<dbReference type="GO" id="GO:0004834">
    <property type="term" value="F:tryptophan synthase activity"/>
    <property type="evidence" value="ECO:0007669"/>
    <property type="project" value="UniProtKB-UniRule"/>
</dbReference>
<dbReference type="CDD" id="cd06446">
    <property type="entry name" value="Trp-synth_B"/>
    <property type="match status" value="1"/>
</dbReference>
<dbReference type="FunFam" id="3.40.50.1100:FF:000001">
    <property type="entry name" value="Tryptophan synthase beta chain"/>
    <property type="match status" value="1"/>
</dbReference>
<dbReference type="FunFam" id="3.40.50.1100:FF:000004">
    <property type="entry name" value="Tryptophan synthase beta chain"/>
    <property type="match status" value="1"/>
</dbReference>
<dbReference type="Gene3D" id="3.40.50.1100">
    <property type="match status" value="2"/>
</dbReference>
<dbReference type="HAMAP" id="MF_00133">
    <property type="entry name" value="Trp_synth_beta"/>
    <property type="match status" value="1"/>
</dbReference>
<dbReference type="InterPro" id="IPR006653">
    <property type="entry name" value="Trp_synth_b_CS"/>
</dbReference>
<dbReference type="InterPro" id="IPR006654">
    <property type="entry name" value="Trp_synth_beta"/>
</dbReference>
<dbReference type="InterPro" id="IPR023026">
    <property type="entry name" value="Trp_synth_beta/beta-like"/>
</dbReference>
<dbReference type="InterPro" id="IPR001926">
    <property type="entry name" value="TrpB-like_PALP"/>
</dbReference>
<dbReference type="InterPro" id="IPR036052">
    <property type="entry name" value="TrpB-like_PALP_sf"/>
</dbReference>
<dbReference type="NCBIfam" id="TIGR00263">
    <property type="entry name" value="trpB"/>
    <property type="match status" value="1"/>
</dbReference>
<dbReference type="PANTHER" id="PTHR48077:SF3">
    <property type="entry name" value="TRYPTOPHAN SYNTHASE"/>
    <property type="match status" value="1"/>
</dbReference>
<dbReference type="PANTHER" id="PTHR48077">
    <property type="entry name" value="TRYPTOPHAN SYNTHASE-RELATED"/>
    <property type="match status" value="1"/>
</dbReference>
<dbReference type="Pfam" id="PF00291">
    <property type="entry name" value="PALP"/>
    <property type="match status" value="1"/>
</dbReference>
<dbReference type="PIRSF" id="PIRSF001413">
    <property type="entry name" value="Trp_syn_beta"/>
    <property type="match status" value="1"/>
</dbReference>
<dbReference type="SUPFAM" id="SSF53686">
    <property type="entry name" value="Tryptophan synthase beta subunit-like PLP-dependent enzymes"/>
    <property type="match status" value="1"/>
</dbReference>
<dbReference type="PROSITE" id="PS00168">
    <property type="entry name" value="TRP_SYNTHASE_BETA"/>
    <property type="match status" value="1"/>
</dbReference>
<comment type="function">
    <text evidence="1">The beta subunit is responsible for the synthesis of L-tryptophan from indole and L-serine.</text>
</comment>
<comment type="catalytic activity">
    <reaction evidence="1">
        <text>(1S,2R)-1-C-(indol-3-yl)glycerol 3-phosphate + L-serine = D-glyceraldehyde 3-phosphate + L-tryptophan + H2O</text>
        <dbReference type="Rhea" id="RHEA:10532"/>
        <dbReference type="ChEBI" id="CHEBI:15377"/>
        <dbReference type="ChEBI" id="CHEBI:33384"/>
        <dbReference type="ChEBI" id="CHEBI:57912"/>
        <dbReference type="ChEBI" id="CHEBI:58866"/>
        <dbReference type="ChEBI" id="CHEBI:59776"/>
        <dbReference type="EC" id="4.2.1.20"/>
    </reaction>
</comment>
<comment type="cofactor">
    <cofactor evidence="1">
        <name>pyridoxal 5'-phosphate</name>
        <dbReference type="ChEBI" id="CHEBI:597326"/>
    </cofactor>
</comment>
<comment type="pathway">
    <text evidence="1">Amino-acid biosynthesis; L-tryptophan biosynthesis; L-tryptophan from chorismate: step 5/5.</text>
</comment>
<comment type="subunit">
    <text evidence="1">Tetramer of two alpha and two beta chains.</text>
</comment>
<comment type="similarity">
    <text evidence="1">Belongs to the TrpB family.</text>
</comment>
<organism>
    <name type="scientific">Yersinia pseudotuberculosis serotype O:1b (strain IP 31758)</name>
    <dbReference type="NCBI Taxonomy" id="349747"/>
    <lineage>
        <taxon>Bacteria</taxon>
        <taxon>Pseudomonadati</taxon>
        <taxon>Pseudomonadota</taxon>
        <taxon>Gammaproteobacteria</taxon>
        <taxon>Enterobacterales</taxon>
        <taxon>Yersiniaceae</taxon>
        <taxon>Yersinia</taxon>
    </lineage>
</organism>
<sequence>MTTLNPYFGEFGGMYVPQILVPALKQLEDAFVSAQLDPEFQAAFQDLLKNYAGRPTALTLCQNLTKGTKTKLYLKREDLLHGGAHKTNQVLGQALLAKRMGKTEIIAETGAGQHGVASALACALLGLKCRIYMGAKDIERQSPNVFRMRLMGAEVIPVHSGSSTLKDACNEALRDWSGTYETAHYMLGTAAGPHPYPTIVREFQRMIGEETKAQILEKEGRLPDAVLACVGGGSNAIGMFADFIDEPDVGLIGVEPAGLGIETGQHGAPLKHGKVGIYFGMKSPMMQTSDGQIEESYSISAGLDFPSVGPQHAYLNSIGRADYVSITDDEALDAFKTLSCKEGIIPALESSHALAHALKMIKADPDKEQILVVNLSGRGDKDIFTVHDILKARGEI</sequence>